<evidence type="ECO:0000255" key="1"/>
<evidence type="ECO:0000255" key="2">
    <source>
        <dbReference type="PROSITE-ProRule" id="PRU00806"/>
    </source>
</evidence>
<evidence type="ECO:0000305" key="3"/>
<accession>P0CJ49</accession>
<accession>F4JVL9</accession>
<accession>Q680R8</accession>
<accession>Q9S7J6</accession>
<accession>Q9SUM6</accession>
<feature type="signal peptide" evidence="1">
    <location>
        <begin position="1"/>
        <end position="26"/>
    </location>
</feature>
<feature type="chain" id="PRO_0000296170" description="Cysteine-rich repeat secretory protein 42">
    <location>
        <begin position="27"/>
        <end position="256"/>
    </location>
</feature>
<feature type="domain" description="Gnk2-homologous 1" evidence="2">
    <location>
        <begin position="33"/>
        <end position="136"/>
    </location>
</feature>
<feature type="domain" description="Gnk2-homologous 2" evidence="2">
    <location>
        <begin position="142"/>
        <end position="253"/>
    </location>
</feature>
<proteinExistence type="inferred from homology"/>
<protein>
    <recommendedName>
        <fullName>Cysteine-rich repeat secretory protein 42</fullName>
    </recommendedName>
</protein>
<organism>
    <name type="scientific">Arabidopsis thaliana</name>
    <name type="common">Mouse-ear cress</name>
    <dbReference type="NCBI Taxonomy" id="3702"/>
    <lineage>
        <taxon>Eukaryota</taxon>
        <taxon>Viridiplantae</taxon>
        <taxon>Streptophyta</taxon>
        <taxon>Embryophyta</taxon>
        <taxon>Tracheophyta</taxon>
        <taxon>Spermatophyta</taxon>
        <taxon>Magnoliopsida</taxon>
        <taxon>eudicotyledons</taxon>
        <taxon>Gunneridae</taxon>
        <taxon>Pentapetalae</taxon>
        <taxon>rosids</taxon>
        <taxon>malvids</taxon>
        <taxon>Brassicales</taxon>
        <taxon>Brassicaceae</taxon>
        <taxon>Camelineae</taxon>
        <taxon>Arabidopsis</taxon>
    </lineage>
</organism>
<name>CRR42_ARATH</name>
<gene>
    <name type="primary">CRRSP42</name>
    <name type="ordered locus">At4g20645</name>
    <name type="ORF">F9F13.300</name>
</gene>
<reference key="1">
    <citation type="journal article" date="1999" name="Nature">
        <title>Sequence and analysis of chromosome 4 of the plant Arabidopsis thaliana.</title>
        <authorList>
            <person name="Mayer K.F.X."/>
            <person name="Schueller C."/>
            <person name="Wambutt R."/>
            <person name="Murphy G."/>
            <person name="Volckaert G."/>
            <person name="Pohl T."/>
            <person name="Duesterhoeft A."/>
            <person name="Stiekema W."/>
            <person name="Entian K.-D."/>
            <person name="Terryn N."/>
            <person name="Harris B."/>
            <person name="Ansorge W."/>
            <person name="Brandt P."/>
            <person name="Grivell L.A."/>
            <person name="Rieger M."/>
            <person name="Weichselgartner M."/>
            <person name="de Simone V."/>
            <person name="Obermaier B."/>
            <person name="Mache R."/>
            <person name="Mueller M."/>
            <person name="Kreis M."/>
            <person name="Delseny M."/>
            <person name="Puigdomenech P."/>
            <person name="Watson M."/>
            <person name="Schmidtheini T."/>
            <person name="Reichert B."/>
            <person name="Portetelle D."/>
            <person name="Perez-Alonso M."/>
            <person name="Boutry M."/>
            <person name="Bancroft I."/>
            <person name="Vos P."/>
            <person name="Hoheisel J."/>
            <person name="Zimmermann W."/>
            <person name="Wedler H."/>
            <person name="Ridley P."/>
            <person name="Langham S.-A."/>
            <person name="McCullagh B."/>
            <person name="Bilham L."/>
            <person name="Robben J."/>
            <person name="van der Schueren J."/>
            <person name="Grymonprez B."/>
            <person name="Chuang Y.-J."/>
            <person name="Vandenbussche F."/>
            <person name="Braeken M."/>
            <person name="Weltjens I."/>
            <person name="Voet M."/>
            <person name="Bastiaens I."/>
            <person name="Aert R."/>
            <person name="Defoor E."/>
            <person name="Weitzenegger T."/>
            <person name="Bothe G."/>
            <person name="Ramsperger U."/>
            <person name="Hilbert H."/>
            <person name="Braun M."/>
            <person name="Holzer E."/>
            <person name="Brandt A."/>
            <person name="Peters S."/>
            <person name="van Staveren M."/>
            <person name="Dirkse W."/>
            <person name="Mooijman P."/>
            <person name="Klein Lankhorst R."/>
            <person name="Rose M."/>
            <person name="Hauf J."/>
            <person name="Koetter P."/>
            <person name="Berneiser S."/>
            <person name="Hempel S."/>
            <person name="Feldpausch M."/>
            <person name="Lamberth S."/>
            <person name="Van den Daele H."/>
            <person name="De Keyser A."/>
            <person name="Buysshaert C."/>
            <person name="Gielen J."/>
            <person name="Villarroel R."/>
            <person name="De Clercq R."/>
            <person name="van Montagu M."/>
            <person name="Rogers J."/>
            <person name="Cronin A."/>
            <person name="Quail M.A."/>
            <person name="Bray-Allen S."/>
            <person name="Clark L."/>
            <person name="Doggett J."/>
            <person name="Hall S."/>
            <person name="Kay M."/>
            <person name="Lennard N."/>
            <person name="McLay K."/>
            <person name="Mayes R."/>
            <person name="Pettett A."/>
            <person name="Rajandream M.A."/>
            <person name="Lyne M."/>
            <person name="Benes V."/>
            <person name="Rechmann S."/>
            <person name="Borkova D."/>
            <person name="Bloecker H."/>
            <person name="Scharfe M."/>
            <person name="Grimm M."/>
            <person name="Loehnert T.-H."/>
            <person name="Dose S."/>
            <person name="de Haan M."/>
            <person name="Maarse A.C."/>
            <person name="Schaefer M."/>
            <person name="Mueller-Auer S."/>
            <person name="Gabel C."/>
            <person name="Fuchs M."/>
            <person name="Fartmann B."/>
            <person name="Granderath K."/>
            <person name="Dauner D."/>
            <person name="Herzl A."/>
            <person name="Neumann S."/>
            <person name="Argiriou A."/>
            <person name="Vitale D."/>
            <person name="Liguori R."/>
            <person name="Piravandi E."/>
            <person name="Massenet O."/>
            <person name="Quigley F."/>
            <person name="Clabauld G."/>
            <person name="Muendlein A."/>
            <person name="Felber R."/>
            <person name="Schnabl S."/>
            <person name="Hiller R."/>
            <person name="Schmidt W."/>
            <person name="Lecharny A."/>
            <person name="Aubourg S."/>
            <person name="Chefdor F."/>
            <person name="Cooke R."/>
            <person name="Berger C."/>
            <person name="Monfort A."/>
            <person name="Casacuberta E."/>
            <person name="Gibbons T."/>
            <person name="Weber N."/>
            <person name="Vandenbol M."/>
            <person name="Bargues M."/>
            <person name="Terol J."/>
            <person name="Torres A."/>
            <person name="Perez-Perez A."/>
            <person name="Purnelle B."/>
            <person name="Bent E."/>
            <person name="Johnson S."/>
            <person name="Tacon D."/>
            <person name="Jesse T."/>
            <person name="Heijnen L."/>
            <person name="Schwarz S."/>
            <person name="Scholler P."/>
            <person name="Heber S."/>
            <person name="Francs P."/>
            <person name="Bielke C."/>
            <person name="Frishman D."/>
            <person name="Haase D."/>
            <person name="Lemcke K."/>
            <person name="Mewes H.-W."/>
            <person name="Stocker S."/>
            <person name="Zaccaria P."/>
            <person name="Bevan M."/>
            <person name="Wilson R.K."/>
            <person name="de la Bastide M."/>
            <person name="Habermann K."/>
            <person name="Parnell L."/>
            <person name="Dedhia N."/>
            <person name="Gnoj L."/>
            <person name="Schutz K."/>
            <person name="Huang E."/>
            <person name="Spiegel L."/>
            <person name="Sekhon M."/>
            <person name="Murray J."/>
            <person name="Sheet P."/>
            <person name="Cordes M."/>
            <person name="Abu-Threideh J."/>
            <person name="Stoneking T."/>
            <person name="Kalicki J."/>
            <person name="Graves T."/>
            <person name="Harmon G."/>
            <person name="Edwards J."/>
            <person name="Latreille P."/>
            <person name="Courtney L."/>
            <person name="Cloud J."/>
            <person name="Abbott A."/>
            <person name="Scott K."/>
            <person name="Johnson D."/>
            <person name="Minx P."/>
            <person name="Bentley D."/>
            <person name="Fulton B."/>
            <person name="Miller N."/>
            <person name="Greco T."/>
            <person name="Kemp K."/>
            <person name="Kramer J."/>
            <person name="Fulton L."/>
            <person name="Mardis E."/>
            <person name="Dante M."/>
            <person name="Pepin K."/>
            <person name="Hillier L.W."/>
            <person name="Nelson J."/>
            <person name="Spieth J."/>
            <person name="Ryan E."/>
            <person name="Andrews S."/>
            <person name="Geisel C."/>
            <person name="Layman D."/>
            <person name="Du H."/>
            <person name="Ali J."/>
            <person name="Berghoff A."/>
            <person name="Jones K."/>
            <person name="Drone K."/>
            <person name="Cotton M."/>
            <person name="Joshu C."/>
            <person name="Antonoiu B."/>
            <person name="Zidanic M."/>
            <person name="Strong C."/>
            <person name="Sun H."/>
            <person name="Lamar B."/>
            <person name="Yordan C."/>
            <person name="Ma P."/>
            <person name="Zhong J."/>
            <person name="Preston R."/>
            <person name="Vil D."/>
            <person name="Shekher M."/>
            <person name="Matero A."/>
            <person name="Shah R."/>
            <person name="Swaby I.K."/>
            <person name="O'Shaughnessy A."/>
            <person name="Rodriguez M."/>
            <person name="Hoffman J."/>
            <person name="Till S."/>
            <person name="Granat S."/>
            <person name="Shohdy N."/>
            <person name="Hasegawa A."/>
            <person name="Hameed A."/>
            <person name="Lodhi M."/>
            <person name="Johnson A."/>
            <person name="Chen E."/>
            <person name="Marra M.A."/>
            <person name="Martienssen R."/>
            <person name="McCombie W.R."/>
        </authorList>
    </citation>
    <scope>NUCLEOTIDE SEQUENCE [LARGE SCALE GENOMIC DNA]</scope>
    <source>
        <strain>cv. Columbia</strain>
    </source>
</reference>
<reference key="2">
    <citation type="journal article" date="2017" name="Plant J.">
        <title>Araport11: a complete reannotation of the Arabidopsis thaliana reference genome.</title>
        <authorList>
            <person name="Cheng C.Y."/>
            <person name="Krishnakumar V."/>
            <person name="Chan A.P."/>
            <person name="Thibaud-Nissen F."/>
            <person name="Schobel S."/>
            <person name="Town C.D."/>
        </authorList>
    </citation>
    <scope>GENOME REANNOTATION</scope>
    <source>
        <strain>cv. Columbia</strain>
    </source>
</reference>
<reference key="3">
    <citation type="journal article" date="2001" name="Plant Physiol.">
        <title>A superfamily of proteins with novel cysteine-rich repeats.</title>
        <authorList>
            <person name="Chen Z."/>
        </authorList>
    </citation>
    <scope>GENE FAMILY ORGANIZATION</scope>
    <scope>NOMENCLATURE</scope>
</reference>
<dbReference type="EMBL" id="AL080253">
    <property type="protein sequence ID" value="CAB45831.1"/>
    <property type="status" value="ALT_SEQ"/>
    <property type="molecule type" value="Genomic_DNA"/>
</dbReference>
<dbReference type="EMBL" id="AL161553">
    <property type="protein sequence ID" value="CAB79065.1"/>
    <property type="status" value="ALT_SEQ"/>
    <property type="molecule type" value="Genomic_DNA"/>
</dbReference>
<dbReference type="EMBL" id="CP002687">
    <property type="status" value="NOT_ANNOTATED_CDS"/>
    <property type="molecule type" value="Genomic_DNA"/>
</dbReference>
<dbReference type="PIR" id="G85234">
    <property type="entry name" value="G85234"/>
</dbReference>
<dbReference type="PIR" id="T10595">
    <property type="entry name" value="T10595"/>
</dbReference>
<dbReference type="RefSeq" id="NP_001320013.1">
    <property type="nucleotide sequence ID" value="NM_001341449.1"/>
</dbReference>
<dbReference type="RefSeq" id="NP_567608.3">
    <property type="nucleotide sequence ID" value="NM_118177.3"/>
</dbReference>
<dbReference type="RefSeq" id="NP_567609.3">
    <property type="nucleotide sequence ID" value="NM_118178.3"/>
</dbReference>
<dbReference type="RefSeq" id="NP_567610.3">
    <property type="nucleotide sequence ID" value="NM_118179.3"/>
</dbReference>
<dbReference type="RefSeq" id="NP_567611.3">
    <property type="nucleotide sequence ID" value="NM_118180.3"/>
</dbReference>
<dbReference type="RefSeq" id="NP_567612.3">
    <property type="nucleotide sequence ID" value="NM_118181.3"/>
</dbReference>
<dbReference type="RefSeq" id="NP_567614.3">
    <property type="nucleotide sequence ID" value="NM_118183.3"/>
</dbReference>
<dbReference type="SMR" id="P0CJ49"/>
<dbReference type="STRING" id="3702.P0CJ49"/>
<dbReference type="EnsemblPlants" id="AT4G20580.1">
    <property type="protein sequence ID" value="AT4G20580.1"/>
    <property type="gene ID" value="AT4G20580"/>
</dbReference>
<dbReference type="EnsemblPlants" id="AT4G20590.1">
    <property type="protein sequence ID" value="AT4G20590.1"/>
    <property type="gene ID" value="AT4G20590"/>
</dbReference>
<dbReference type="EnsemblPlants" id="AT4G20600.1">
    <property type="protein sequence ID" value="AT4G20600.1"/>
    <property type="gene ID" value="AT4G20600"/>
</dbReference>
<dbReference type="EnsemblPlants" id="AT4G20610.1">
    <property type="protein sequence ID" value="AT4G20610.1"/>
    <property type="gene ID" value="AT4G20610"/>
</dbReference>
<dbReference type="EnsemblPlants" id="AT4G20620.1">
    <property type="protein sequence ID" value="AT4G20620.1"/>
    <property type="gene ID" value="AT4G20620"/>
</dbReference>
<dbReference type="EnsemblPlants" id="AT4G20630.1">
    <property type="protein sequence ID" value="AT4G20630.1"/>
    <property type="gene ID" value="AT4G20630"/>
</dbReference>
<dbReference type="EnsemblPlants" id="AT4G20640.1">
    <property type="protein sequence ID" value="AT4G20640.1"/>
    <property type="gene ID" value="AT4G20640"/>
</dbReference>
<dbReference type="Gramene" id="AT4G20580.1">
    <property type="protein sequence ID" value="AT4G20580.1"/>
    <property type="gene ID" value="AT4G20580"/>
</dbReference>
<dbReference type="Gramene" id="AT4G20590.1">
    <property type="protein sequence ID" value="AT4G20590.1"/>
    <property type="gene ID" value="AT4G20590"/>
</dbReference>
<dbReference type="Gramene" id="AT4G20600.1">
    <property type="protein sequence ID" value="AT4G20600.1"/>
    <property type="gene ID" value="AT4G20600"/>
</dbReference>
<dbReference type="Gramene" id="AT4G20610.1">
    <property type="protein sequence ID" value="AT4G20610.1"/>
    <property type="gene ID" value="AT4G20610"/>
</dbReference>
<dbReference type="Gramene" id="AT4G20620.1">
    <property type="protein sequence ID" value="AT4G20620.1"/>
    <property type="gene ID" value="AT4G20620"/>
</dbReference>
<dbReference type="Gramene" id="AT4G20630.1">
    <property type="protein sequence ID" value="AT4G20630.1"/>
    <property type="gene ID" value="AT4G20630"/>
</dbReference>
<dbReference type="Gramene" id="AT4G20640.1">
    <property type="protein sequence ID" value="AT4G20640.1"/>
    <property type="gene ID" value="AT4G20640"/>
</dbReference>
<dbReference type="KEGG" id="ath:AT4G20580"/>
<dbReference type="KEGG" id="ath:AT4G20590"/>
<dbReference type="KEGG" id="ath:AT4G20600"/>
<dbReference type="KEGG" id="ath:AT4G20610"/>
<dbReference type="KEGG" id="ath:AT4G20620"/>
<dbReference type="KEGG" id="ath:AT4G20630"/>
<dbReference type="KEGG" id="ath:AT4G20640"/>
<dbReference type="Araport" id="AT4G20645"/>
<dbReference type="TAIR" id="AT4G20645"/>
<dbReference type="HOGENOM" id="CLU_000288_35_0_1"/>
<dbReference type="InParanoid" id="P0CJ49"/>
<dbReference type="OMA" id="FIQVWNI"/>
<dbReference type="PRO" id="PR:P0CJ49"/>
<dbReference type="Proteomes" id="UP000006548">
    <property type="component" value="Chromosome 4"/>
</dbReference>
<dbReference type="ExpressionAtlas" id="P0CJ49">
    <property type="expression patterns" value="baseline"/>
</dbReference>
<dbReference type="GO" id="GO:0005576">
    <property type="term" value="C:extracellular region"/>
    <property type="evidence" value="ECO:0007669"/>
    <property type="project" value="UniProtKB-SubCell"/>
</dbReference>
<dbReference type="CDD" id="cd23509">
    <property type="entry name" value="Gnk2-like"/>
    <property type="match status" value="2"/>
</dbReference>
<dbReference type="FunFam" id="3.30.430.20:FF:000002">
    <property type="entry name" value="Cysteine-rich receptor-like protein kinase 10"/>
    <property type="match status" value="1"/>
</dbReference>
<dbReference type="Gene3D" id="3.30.430.20">
    <property type="entry name" value="Gnk2 domain, C-X8-C-X2-C motif"/>
    <property type="match status" value="2"/>
</dbReference>
<dbReference type="InterPro" id="IPR050581">
    <property type="entry name" value="CRR_secretory_protein"/>
</dbReference>
<dbReference type="InterPro" id="IPR002902">
    <property type="entry name" value="GNK2"/>
</dbReference>
<dbReference type="InterPro" id="IPR038408">
    <property type="entry name" value="GNK2_sf"/>
</dbReference>
<dbReference type="PANTHER" id="PTHR32411:SF54">
    <property type="entry name" value="CYSTEINE-RICH REPEAT SECRETORY PROTEIN 29-RELATED"/>
    <property type="match status" value="1"/>
</dbReference>
<dbReference type="PANTHER" id="PTHR32411">
    <property type="entry name" value="CYSTEINE-RICH REPEAT SECRETORY PROTEIN 38-RELATED"/>
    <property type="match status" value="1"/>
</dbReference>
<dbReference type="Pfam" id="PF01657">
    <property type="entry name" value="Stress-antifung"/>
    <property type="match status" value="2"/>
</dbReference>
<dbReference type="PROSITE" id="PS51473">
    <property type="entry name" value="GNK2"/>
    <property type="match status" value="2"/>
</dbReference>
<keyword id="KW-1185">Reference proteome</keyword>
<keyword id="KW-0677">Repeat</keyword>
<keyword id="KW-0964">Secreted</keyword>
<keyword id="KW-0732">Signal</keyword>
<comment type="subcellular location">
    <subcellularLocation>
        <location evidence="3">Secreted</location>
    </subcellularLocation>
</comment>
<comment type="similarity">
    <text evidence="3">Belongs to the cysteine-rich repeat secretory protein family.</text>
</comment>
<comment type="sequence caution" evidence="3">
    <conflict type="erroneous gene model prediction">
        <sequence resource="EMBL-CDS" id="CAB45831"/>
    </conflict>
</comment>
<comment type="sequence caution" evidence="3">
    <conflict type="erroneous gene model prediction">
        <sequence resource="EMBL-CDS" id="CAB79065"/>
    </conflict>
    <text>The predicted gene has been split into 2 genes: At4g20645 and At4g20650.</text>
</comment>
<sequence length="256" mass="29018">MSSVFGSVHILAMIAIQLLLTHSVSSLNLTNAYLHHKCSNTQGKYKQGSAFEKNLNLVLSTITSIGNFRDGFRYTEEGEDPNNVFVMFQCRGDSYWSKCPPCISTAVSGLRRRCPRNKGAIIWYDQCLLKISSVASFNKIDYENDFYLSNPNNMSDRGLFNKETSALLEKLAYKASDRNNLDGKQLVLYAAGEKRIGTKKVYAMVQCTKDLIFTKCFECLEGILRKFPQCCDGKRGGRVFGTSCNFRYELYPFLRN</sequence>